<dbReference type="EMBL" id="AL009126">
    <property type="protein sequence ID" value="CAX52623.1"/>
    <property type="molecule type" value="Genomic_DNA"/>
</dbReference>
<dbReference type="RefSeq" id="WP_003245467.1">
    <property type="nucleotide sequence ID" value="NZ_OZ025638.1"/>
</dbReference>
<dbReference type="RefSeq" id="YP_003097730.1">
    <property type="nucleotide sequence ID" value="NC_000964.3"/>
</dbReference>
<dbReference type="SMR" id="C0H415"/>
<dbReference type="FunCoup" id="C0H415">
    <property type="interactions" value="8"/>
</dbReference>
<dbReference type="STRING" id="224308.BSU17559"/>
<dbReference type="PaxDb" id="224308-BSU17559"/>
<dbReference type="EnsemblBacteria" id="CAX52623">
    <property type="protein sequence ID" value="CAX52623"/>
    <property type="gene ID" value="BSU_17559"/>
</dbReference>
<dbReference type="GeneID" id="8303140"/>
<dbReference type="KEGG" id="bsu:BSU17559"/>
<dbReference type="PATRIC" id="fig|224308.179.peg.1905"/>
<dbReference type="InParanoid" id="C0H415"/>
<dbReference type="BioCyc" id="BSUB:BSU17559-MONOMER"/>
<dbReference type="Proteomes" id="UP000001570">
    <property type="component" value="Chromosome"/>
</dbReference>
<dbReference type="GO" id="GO:0005886">
    <property type="term" value="C:plasma membrane"/>
    <property type="evidence" value="ECO:0007669"/>
    <property type="project" value="UniProtKB-SubCell"/>
</dbReference>
<evidence type="ECO:0000255" key="1"/>
<evidence type="ECO:0000256" key="2">
    <source>
        <dbReference type="SAM" id="MobiDB-lite"/>
    </source>
</evidence>
<evidence type="ECO:0000305" key="3"/>
<sequence length="54" mass="6643">MDRKKDEIQRKYREQMREKKEREKEDGSSHTFEIVVVLAIIILMFFFNSVFKAF</sequence>
<accession>C0H415</accession>
<reference key="1">
    <citation type="journal article" date="1997" name="Nature">
        <title>The complete genome sequence of the Gram-positive bacterium Bacillus subtilis.</title>
        <authorList>
            <person name="Kunst F."/>
            <person name="Ogasawara N."/>
            <person name="Moszer I."/>
            <person name="Albertini A.M."/>
            <person name="Alloni G."/>
            <person name="Azevedo V."/>
            <person name="Bertero M.G."/>
            <person name="Bessieres P."/>
            <person name="Bolotin A."/>
            <person name="Borchert S."/>
            <person name="Borriss R."/>
            <person name="Boursier L."/>
            <person name="Brans A."/>
            <person name="Braun M."/>
            <person name="Brignell S.C."/>
            <person name="Bron S."/>
            <person name="Brouillet S."/>
            <person name="Bruschi C.V."/>
            <person name="Caldwell B."/>
            <person name="Capuano V."/>
            <person name="Carter N.M."/>
            <person name="Choi S.-K."/>
            <person name="Codani J.-J."/>
            <person name="Connerton I.F."/>
            <person name="Cummings N.J."/>
            <person name="Daniel R.A."/>
            <person name="Denizot F."/>
            <person name="Devine K.M."/>
            <person name="Duesterhoeft A."/>
            <person name="Ehrlich S.D."/>
            <person name="Emmerson P.T."/>
            <person name="Entian K.-D."/>
            <person name="Errington J."/>
            <person name="Fabret C."/>
            <person name="Ferrari E."/>
            <person name="Foulger D."/>
            <person name="Fritz C."/>
            <person name="Fujita M."/>
            <person name="Fujita Y."/>
            <person name="Fuma S."/>
            <person name="Galizzi A."/>
            <person name="Galleron N."/>
            <person name="Ghim S.-Y."/>
            <person name="Glaser P."/>
            <person name="Goffeau A."/>
            <person name="Golightly E.J."/>
            <person name="Grandi G."/>
            <person name="Guiseppi G."/>
            <person name="Guy B.J."/>
            <person name="Haga K."/>
            <person name="Haiech J."/>
            <person name="Harwood C.R."/>
            <person name="Henaut A."/>
            <person name="Hilbert H."/>
            <person name="Holsappel S."/>
            <person name="Hosono S."/>
            <person name="Hullo M.-F."/>
            <person name="Itaya M."/>
            <person name="Jones L.-M."/>
            <person name="Joris B."/>
            <person name="Karamata D."/>
            <person name="Kasahara Y."/>
            <person name="Klaerr-Blanchard M."/>
            <person name="Klein C."/>
            <person name="Kobayashi Y."/>
            <person name="Koetter P."/>
            <person name="Koningstein G."/>
            <person name="Krogh S."/>
            <person name="Kumano M."/>
            <person name="Kurita K."/>
            <person name="Lapidus A."/>
            <person name="Lardinois S."/>
            <person name="Lauber J."/>
            <person name="Lazarevic V."/>
            <person name="Lee S.-M."/>
            <person name="Levine A."/>
            <person name="Liu H."/>
            <person name="Masuda S."/>
            <person name="Mauel C."/>
            <person name="Medigue C."/>
            <person name="Medina N."/>
            <person name="Mellado R.P."/>
            <person name="Mizuno M."/>
            <person name="Moestl D."/>
            <person name="Nakai S."/>
            <person name="Noback M."/>
            <person name="Noone D."/>
            <person name="O'Reilly M."/>
            <person name="Ogawa K."/>
            <person name="Ogiwara A."/>
            <person name="Oudega B."/>
            <person name="Park S.-H."/>
            <person name="Parro V."/>
            <person name="Pohl T.M."/>
            <person name="Portetelle D."/>
            <person name="Porwollik S."/>
            <person name="Prescott A.M."/>
            <person name="Presecan E."/>
            <person name="Pujic P."/>
            <person name="Purnelle B."/>
            <person name="Rapoport G."/>
            <person name="Rey M."/>
            <person name="Reynolds S."/>
            <person name="Rieger M."/>
            <person name="Rivolta C."/>
            <person name="Rocha E."/>
            <person name="Roche B."/>
            <person name="Rose M."/>
            <person name="Sadaie Y."/>
            <person name="Sato T."/>
            <person name="Scanlan E."/>
            <person name="Schleich S."/>
            <person name="Schroeter R."/>
            <person name="Scoffone F."/>
            <person name="Sekiguchi J."/>
            <person name="Sekowska A."/>
            <person name="Seror S.J."/>
            <person name="Serror P."/>
            <person name="Shin B.-S."/>
            <person name="Soldo B."/>
            <person name="Sorokin A."/>
            <person name="Tacconi E."/>
            <person name="Takagi T."/>
            <person name="Takahashi H."/>
            <person name="Takemaru K."/>
            <person name="Takeuchi M."/>
            <person name="Tamakoshi A."/>
            <person name="Tanaka T."/>
            <person name="Terpstra P."/>
            <person name="Tognoni A."/>
            <person name="Tosato V."/>
            <person name="Uchiyama S."/>
            <person name="Vandenbol M."/>
            <person name="Vannier F."/>
            <person name="Vassarotti A."/>
            <person name="Viari A."/>
            <person name="Wambutt R."/>
            <person name="Wedler E."/>
            <person name="Wedler H."/>
            <person name="Weitzenegger T."/>
            <person name="Winters P."/>
            <person name="Wipat A."/>
            <person name="Yamamoto H."/>
            <person name="Yamane K."/>
            <person name="Yasumoto K."/>
            <person name="Yata K."/>
            <person name="Yoshida K."/>
            <person name="Yoshikawa H.-F."/>
            <person name="Zumstein E."/>
            <person name="Yoshikawa H."/>
            <person name="Danchin A."/>
        </authorList>
    </citation>
    <scope>NUCLEOTIDE SEQUENCE [LARGE SCALE GENOMIC DNA]</scope>
    <source>
        <strain>168</strain>
    </source>
</reference>
<comment type="subcellular location">
    <subcellularLocation>
        <location evidence="3">Cell membrane</location>
        <topology evidence="3">Single-pass membrane protein</topology>
    </subcellularLocation>
</comment>
<protein>
    <recommendedName>
        <fullName>Uncharacterized membrane protein YnzI</fullName>
    </recommendedName>
</protein>
<organism>
    <name type="scientific">Bacillus subtilis (strain 168)</name>
    <dbReference type="NCBI Taxonomy" id="224308"/>
    <lineage>
        <taxon>Bacteria</taxon>
        <taxon>Bacillati</taxon>
        <taxon>Bacillota</taxon>
        <taxon>Bacilli</taxon>
        <taxon>Bacillales</taxon>
        <taxon>Bacillaceae</taxon>
        <taxon>Bacillus</taxon>
    </lineage>
</organism>
<name>YNZI_BACSU</name>
<feature type="chain" id="PRO_0000382669" description="Uncharacterized membrane protein YnzI">
    <location>
        <begin position="1"/>
        <end position="54"/>
    </location>
</feature>
<feature type="transmembrane region" description="Helical" evidence="1">
    <location>
        <begin position="31"/>
        <end position="51"/>
    </location>
</feature>
<feature type="region of interest" description="Disordered" evidence="2">
    <location>
        <begin position="1"/>
        <end position="29"/>
    </location>
</feature>
<feature type="compositionally biased region" description="Basic and acidic residues" evidence="2">
    <location>
        <begin position="1"/>
        <end position="28"/>
    </location>
</feature>
<proteinExistence type="predicted"/>
<keyword id="KW-1003">Cell membrane</keyword>
<keyword id="KW-0472">Membrane</keyword>
<keyword id="KW-1185">Reference proteome</keyword>
<keyword id="KW-0812">Transmembrane</keyword>
<keyword id="KW-1133">Transmembrane helix</keyword>
<gene>
    <name type="primary">ynzI</name>
    <name type="ordered locus">BSU17559</name>
</gene>